<comment type="function">
    <text evidence="1">Catalyzes the conversion of (8S)-3',8-cyclo-7,8-dihydroguanosine 5'-triphosphate to cyclic pyranopterin monophosphate (cPMP).</text>
</comment>
<comment type="catalytic activity">
    <reaction evidence="1">
        <text>(8S)-3',8-cyclo-7,8-dihydroguanosine 5'-triphosphate = cyclic pyranopterin phosphate + diphosphate</text>
        <dbReference type="Rhea" id="RHEA:49580"/>
        <dbReference type="ChEBI" id="CHEBI:33019"/>
        <dbReference type="ChEBI" id="CHEBI:59648"/>
        <dbReference type="ChEBI" id="CHEBI:131766"/>
        <dbReference type="EC" id="4.6.1.17"/>
    </reaction>
</comment>
<comment type="pathway">
    <text evidence="1">Cofactor biosynthesis; molybdopterin biosynthesis.</text>
</comment>
<comment type="subunit">
    <text evidence="1">Homohexamer; trimer of dimers.</text>
</comment>
<comment type="similarity">
    <text evidence="1">Belongs to the MoaC family.</text>
</comment>
<sequence>MSQLTHINAAGEAHMVDVSAKAETVREARAEAFVTMRSETLAMIIDGRHHKGDVFATARIAGIQAAKRTWDLIPLCHPLMLSKVEVNLQAEPEHNRVRIETLCRLTGKTGVEMEALTAASVAALTIYDMCKAVQKDMVIGPVRLLAKSGGKSGDFKVEADD</sequence>
<name>MOAC_ECOLC</name>
<dbReference type="EC" id="4.6.1.17" evidence="1"/>
<dbReference type="EMBL" id="CP000946">
    <property type="protein sequence ID" value="ACA78488.1"/>
    <property type="molecule type" value="Genomic_DNA"/>
</dbReference>
<dbReference type="RefSeq" id="WP_000080885.1">
    <property type="nucleotide sequence ID" value="NZ_MTFT01000003.1"/>
</dbReference>
<dbReference type="SMR" id="B1IXI5"/>
<dbReference type="GeneID" id="86945666"/>
<dbReference type="KEGG" id="ecl:EcolC_2860"/>
<dbReference type="HOGENOM" id="CLU_074693_1_1_6"/>
<dbReference type="UniPathway" id="UPA00344"/>
<dbReference type="GO" id="GO:0061799">
    <property type="term" value="F:cyclic pyranopterin monophosphate synthase activity"/>
    <property type="evidence" value="ECO:0007669"/>
    <property type="project" value="UniProtKB-UniRule"/>
</dbReference>
<dbReference type="GO" id="GO:0006777">
    <property type="term" value="P:Mo-molybdopterin cofactor biosynthetic process"/>
    <property type="evidence" value="ECO:0007669"/>
    <property type="project" value="UniProtKB-UniRule"/>
</dbReference>
<dbReference type="CDD" id="cd01420">
    <property type="entry name" value="MoaC_PE"/>
    <property type="match status" value="1"/>
</dbReference>
<dbReference type="FunFam" id="3.30.70.640:FF:000001">
    <property type="entry name" value="Cyclic pyranopterin monophosphate synthase"/>
    <property type="match status" value="1"/>
</dbReference>
<dbReference type="Gene3D" id="3.30.70.640">
    <property type="entry name" value="Molybdopterin cofactor biosynthesis C (MoaC) domain"/>
    <property type="match status" value="1"/>
</dbReference>
<dbReference type="HAMAP" id="MF_01224_B">
    <property type="entry name" value="MoaC_B"/>
    <property type="match status" value="1"/>
</dbReference>
<dbReference type="InterPro" id="IPR023045">
    <property type="entry name" value="MoaC"/>
</dbReference>
<dbReference type="InterPro" id="IPR047594">
    <property type="entry name" value="MoaC_bact/euk"/>
</dbReference>
<dbReference type="InterPro" id="IPR036522">
    <property type="entry name" value="MoaC_sf"/>
</dbReference>
<dbReference type="InterPro" id="IPR050105">
    <property type="entry name" value="MoCo_biosynth_MoaA/MoaC"/>
</dbReference>
<dbReference type="InterPro" id="IPR002820">
    <property type="entry name" value="Mopterin_CF_biosynth-C_dom"/>
</dbReference>
<dbReference type="NCBIfam" id="TIGR00581">
    <property type="entry name" value="moaC"/>
    <property type="match status" value="1"/>
</dbReference>
<dbReference type="NCBIfam" id="NF006870">
    <property type="entry name" value="PRK09364.1"/>
    <property type="match status" value="1"/>
</dbReference>
<dbReference type="PANTHER" id="PTHR22960">
    <property type="entry name" value="MOLYBDOPTERIN COFACTOR SYNTHESIS PROTEIN A"/>
    <property type="match status" value="1"/>
</dbReference>
<dbReference type="Pfam" id="PF01967">
    <property type="entry name" value="MoaC"/>
    <property type="match status" value="1"/>
</dbReference>
<dbReference type="SUPFAM" id="SSF55040">
    <property type="entry name" value="Molybdenum cofactor biosynthesis protein C, MoaC"/>
    <property type="match status" value="1"/>
</dbReference>
<feature type="chain" id="PRO_1000085672" description="Cyclic pyranopterin monophosphate synthase">
    <location>
        <begin position="1"/>
        <end position="161"/>
    </location>
</feature>
<feature type="active site" evidence="1">
    <location>
        <position position="128"/>
    </location>
</feature>
<feature type="binding site" evidence="1">
    <location>
        <begin position="75"/>
        <end position="77"/>
    </location>
    <ligand>
        <name>substrate</name>
    </ligand>
</feature>
<feature type="binding site" evidence="1">
    <location>
        <begin position="113"/>
        <end position="114"/>
    </location>
    <ligand>
        <name>substrate</name>
    </ligand>
</feature>
<protein>
    <recommendedName>
        <fullName evidence="1">Cyclic pyranopterin monophosphate synthase</fullName>
        <ecNumber evidence="1">4.6.1.17</ecNumber>
    </recommendedName>
    <alternativeName>
        <fullName evidence="1">Molybdenum cofactor biosynthesis protein C</fullName>
    </alternativeName>
</protein>
<reference key="1">
    <citation type="submission" date="2008-02" db="EMBL/GenBank/DDBJ databases">
        <title>Complete sequence of Escherichia coli C str. ATCC 8739.</title>
        <authorList>
            <person name="Copeland A."/>
            <person name="Lucas S."/>
            <person name="Lapidus A."/>
            <person name="Glavina del Rio T."/>
            <person name="Dalin E."/>
            <person name="Tice H."/>
            <person name="Bruce D."/>
            <person name="Goodwin L."/>
            <person name="Pitluck S."/>
            <person name="Kiss H."/>
            <person name="Brettin T."/>
            <person name="Detter J.C."/>
            <person name="Han C."/>
            <person name="Kuske C.R."/>
            <person name="Schmutz J."/>
            <person name="Larimer F."/>
            <person name="Land M."/>
            <person name="Hauser L."/>
            <person name="Kyrpides N."/>
            <person name="Mikhailova N."/>
            <person name="Ingram L."/>
            <person name="Richardson P."/>
        </authorList>
    </citation>
    <scope>NUCLEOTIDE SEQUENCE [LARGE SCALE GENOMIC DNA]</scope>
    <source>
        <strain>ATCC 8739 / DSM 1576 / NBRC 3972 / NCIMB 8545 / WDCM 00012 / Crooks</strain>
    </source>
</reference>
<proteinExistence type="inferred from homology"/>
<evidence type="ECO:0000255" key="1">
    <source>
        <dbReference type="HAMAP-Rule" id="MF_01224"/>
    </source>
</evidence>
<organism>
    <name type="scientific">Escherichia coli (strain ATCC 8739 / DSM 1576 / NBRC 3972 / NCIMB 8545 / WDCM 00012 / Crooks)</name>
    <dbReference type="NCBI Taxonomy" id="481805"/>
    <lineage>
        <taxon>Bacteria</taxon>
        <taxon>Pseudomonadati</taxon>
        <taxon>Pseudomonadota</taxon>
        <taxon>Gammaproteobacteria</taxon>
        <taxon>Enterobacterales</taxon>
        <taxon>Enterobacteriaceae</taxon>
        <taxon>Escherichia</taxon>
    </lineage>
</organism>
<accession>B1IXI5</accession>
<keyword id="KW-0456">Lyase</keyword>
<keyword id="KW-0501">Molybdenum cofactor biosynthesis</keyword>
<gene>
    <name evidence="1" type="primary">moaC</name>
    <name type="ordered locus">EcolC_2860</name>
</gene>